<keyword id="KW-0963">Cytoplasm</keyword>
<keyword id="KW-0342">GTP-binding</keyword>
<keyword id="KW-0343">GTPase activation</keyword>
<keyword id="KW-0396">Initiation factor</keyword>
<keyword id="KW-1017">Isopeptide bond</keyword>
<keyword id="KW-0547">Nucleotide-binding</keyword>
<keyword id="KW-0597">Phosphoprotein</keyword>
<keyword id="KW-0648">Protein biosynthesis</keyword>
<keyword id="KW-1185">Reference proteome</keyword>
<keyword id="KW-0832">Ubl conjugation</keyword>
<protein>
    <recommendedName>
        <fullName>Eukaryotic translation initiation factor 5</fullName>
        <shortName>eIF-5</shortName>
    </recommendedName>
</protein>
<name>IF5_PONAB</name>
<accession>Q5R4L0</accession>
<organism>
    <name type="scientific">Pongo abelii</name>
    <name type="common">Sumatran orangutan</name>
    <name type="synonym">Pongo pygmaeus abelii</name>
    <dbReference type="NCBI Taxonomy" id="9601"/>
    <lineage>
        <taxon>Eukaryota</taxon>
        <taxon>Metazoa</taxon>
        <taxon>Chordata</taxon>
        <taxon>Craniata</taxon>
        <taxon>Vertebrata</taxon>
        <taxon>Euteleostomi</taxon>
        <taxon>Mammalia</taxon>
        <taxon>Eutheria</taxon>
        <taxon>Euarchontoglires</taxon>
        <taxon>Primates</taxon>
        <taxon>Haplorrhini</taxon>
        <taxon>Catarrhini</taxon>
        <taxon>Hominidae</taxon>
        <taxon>Pongo</taxon>
    </lineage>
</organism>
<dbReference type="EMBL" id="CR861236">
    <property type="protein sequence ID" value="CAH93306.1"/>
    <property type="molecule type" value="mRNA"/>
</dbReference>
<dbReference type="RefSeq" id="NP_001126945.1">
    <property type="nucleotide sequence ID" value="NM_001133473.1"/>
</dbReference>
<dbReference type="RefSeq" id="XP_009247808.1">
    <property type="nucleotide sequence ID" value="XM_009249533.3"/>
</dbReference>
<dbReference type="BMRB" id="Q5R4L0"/>
<dbReference type="SMR" id="Q5R4L0"/>
<dbReference type="FunCoup" id="Q5R4L0">
    <property type="interactions" value="3134"/>
</dbReference>
<dbReference type="STRING" id="9601.ENSPPYP00000024413"/>
<dbReference type="Ensembl" id="ENSPPYT00000007289.2">
    <property type="protein sequence ID" value="ENSPPYP00000007010.1"/>
    <property type="gene ID" value="ENSPPYG00000006169.3"/>
</dbReference>
<dbReference type="GeneID" id="100173963"/>
<dbReference type="KEGG" id="pon:100173963"/>
<dbReference type="CTD" id="1983"/>
<dbReference type="eggNOG" id="KOG2767">
    <property type="taxonomic scope" value="Eukaryota"/>
</dbReference>
<dbReference type="GeneTree" id="ENSGT00390000016478"/>
<dbReference type="HOGENOM" id="CLU_026663_1_0_1"/>
<dbReference type="InParanoid" id="Q5R4L0"/>
<dbReference type="OMA" id="YRYKMEK"/>
<dbReference type="OrthoDB" id="10250831at2759"/>
<dbReference type="TreeFam" id="TF101533"/>
<dbReference type="Proteomes" id="UP000001595">
    <property type="component" value="Chromosome 14"/>
</dbReference>
<dbReference type="GO" id="GO:0005829">
    <property type="term" value="C:cytosol"/>
    <property type="evidence" value="ECO:0007669"/>
    <property type="project" value="Ensembl"/>
</dbReference>
<dbReference type="GO" id="GO:0005886">
    <property type="term" value="C:plasma membrane"/>
    <property type="evidence" value="ECO:0007669"/>
    <property type="project" value="Ensembl"/>
</dbReference>
<dbReference type="GO" id="GO:0045202">
    <property type="term" value="C:synapse"/>
    <property type="evidence" value="ECO:0007669"/>
    <property type="project" value="Ensembl"/>
</dbReference>
<dbReference type="GO" id="GO:0071074">
    <property type="term" value="F:eukaryotic initiation factor eIF2 binding"/>
    <property type="evidence" value="ECO:0007669"/>
    <property type="project" value="TreeGrafter"/>
</dbReference>
<dbReference type="GO" id="GO:0005092">
    <property type="term" value="F:GDP-dissociation inhibitor activity"/>
    <property type="evidence" value="ECO:0007669"/>
    <property type="project" value="TreeGrafter"/>
</dbReference>
<dbReference type="GO" id="GO:0005525">
    <property type="term" value="F:GTP binding"/>
    <property type="evidence" value="ECO:0007669"/>
    <property type="project" value="UniProtKB-KW"/>
</dbReference>
<dbReference type="GO" id="GO:0005096">
    <property type="term" value="F:GTPase activator activity"/>
    <property type="evidence" value="ECO:0007669"/>
    <property type="project" value="UniProtKB-KW"/>
</dbReference>
<dbReference type="GO" id="GO:0003743">
    <property type="term" value="F:translation initiation factor activity"/>
    <property type="evidence" value="ECO:0007669"/>
    <property type="project" value="UniProtKB-KW"/>
</dbReference>
<dbReference type="GO" id="GO:0001732">
    <property type="term" value="P:formation of cytoplasmic translation initiation complex"/>
    <property type="evidence" value="ECO:0007669"/>
    <property type="project" value="TreeGrafter"/>
</dbReference>
<dbReference type="GO" id="GO:0006446">
    <property type="term" value="P:regulation of translational initiation"/>
    <property type="evidence" value="ECO:0007669"/>
    <property type="project" value="Ensembl"/>
</dbReference>
<dbReference type="GO" id="GO:0042255">
    <property type="term" value="P:ribosome assembly"/>
    <property type="evidence" value="ECO:0007669"/>
    <property type="project" value="Ensembl"/>
</dbReference>
<dbReference type="CDD" id="cd11561">
    <property type="entry name" value="W2_eIF5"/>
    <property type="match status" value="1"/>
</dbReference>
<dbReference type="FunFam" id="2.20.25.350:FF:000002">
    <property type="entry name" value="Eukaryotic translation initiation factor 5"/>
    <property type="match status" value="1"/>
</dbReference>
<dbReference type="FunFam" id="3.30.30.170:FF:000002">
    <property type="entry name" value="Eukaryotic translation initiation factor 5"/>
    <property type="match status" value="1"/>
</dbReference>
<dbReference type="FunFam" id="1.25.40.180:FF:000018">
    <property type="entry name" value="eukaryotic translation initiation factor 5"/>
    <property type="match status" value="1"/>
</dbReference>
<dbReference type="Gene3D" id="1.25.40.180">
    <property type="match status" value="1"/>
</dbReference>
<dbReference type="Gene3D" id="2.20.25.350">
    <property type="match status" value="1"/>
</dbReference>
<dbReference type="Gene3D" id="3.30.30.170">
    <property type="match status" value="1"/>
</dbReference>
<dbReference type="InterPro" id="IPR016024">
    <property type="entry name" value="ARM-type_fold"/>
</dbReference>
<dbReference type="InterPro" id="IPR045196">
    <property type="entry name" value="IF2/IF5"/>
</dbReference>
<dbReference type="InterPro" id="IPR002735">
    <property type="entry name" value="Transl_init_fac_IF2/IF5_dom"/>
</dbReference>
<dbReference type="InterPro" id="IPR016189">
    <property type="entry name" value="Transl_init_fac_IF2/IF5_N"/>
</dbReference>
<dbReference type="InterPro" id="IPR016190">
    <property type="entry name" value="Transl_init_fac_IF2/IF5_Zn-bd"/>
</dbReference>
<dbReference type="InterPro" id="IPR003307">
    <property type="entry name" value="W2_domain"/>
</dbReference>
<dbReference type="PANTHER" id="PTHR23001">
    <property type="entry name" value="EUKARYOTIC TRANSLATION INITIATION FACTOR"/>
    <property type="match status" value="1"/>
</dbReference>
<dbReference type="PANTHER" id="PTHR23001:SF7">
    <property type="entry name" value="EUKARYOTIC TRANSLATION INITIATION FACTOR 5"/>
    <property type="match status" value="1"/>
</dbReference>
<dbReference type="Pfam" id="PF01873">
    <property type="entry name" value="eIF-5_eIF-2B"/>
    <property type="match status" value="1"/>
</dbReference>
<dbReference type="Pfam" id="PF02020">
    <property type="entry name" value="W2"/>
    <property type="match status" value="1"/>
</dbReference>
<dbReference type="SMART" id="SM00653">
    <property type="entry name" value="eIF2B_5"/>
    <property type="match status" value="1"/>
</dbReference>
<dbReference type="SMART" id="SM00515">
    <property type="entry name" value="eIF5C"/>
    <property type="match status" value="1"/>
</dbReference>
<dbReference type="SUPFAM" id="SSF48371">
    <property type="entry name" value="ARM repeat"/>
    <property type="match status" value="1"/>
</dbReference>
<dbReference type="SUPFAM" id="SSF100966">
    <property type="entry name" value="Translation initiation factor 2 beta, aIF2beta, N-terminal domain"/>
    <property type="match status" value="1"/>
</dbReference>
<dbReference type="SUPFAM" id="SSF75689">
    <property type="entry name" value="Zinc-binding domain of translation initiation factor 2 beta"/>
    <property type="match status" value="1"/>
</dbReference>
<dbReference type="PROSITE" id="PS51363">
    <property type="entry name" value="W2"/>
    <property type="match status" value="1"/>
</dbReference>
<proteinExistence type="evidence at transcript level"/>
<sequence>MSVNVNRSVSDQFYRYKMPRLIAKVEGKGNGIKTVIVNMVDVAKALNRPPTYPTKYFGCELGAQTQFDVKNDRYIVNGSHEANKLQDMLDGFIKKFVLCPECENPETDLHVNPKKQTIGNSCKACGYRGMLDTHHKLCTFILKNPPENSDSGTGKKEKEKKNRKGKDKENGSVSSSETPPPPPPPNEISPPPHTMEEEEDDDWGEDTTEEAQRRRMDEISDHAKVLTLSDDLERTIEERVNILFDFVKKKKEEGVIDSSDKEIVAEAERLDVKAMGPLVLTEVLFNEKIREQIKKYRRHFLRFCHNNKKAQRYLLHGLECVVAMHQAQLISKIPHILKEMYDADLLEEEVIISWSEKASKKYVSKELAKEIRVKAEPFIKWLKEAEEESSGGEEDDEDENIEVVYSKTASVPKVETVKSDNKDDDIDIDAI</sequence>
<reference key="1">
    <citation type="submission" date="2004-11" db="EMBL/GenBank/DDBJ databases">
        <authorList>
            <consortium name="The German cDNA consortium"/>
        </authorList>
    </citation>
    <scope>NUCLEOTIDE SEQUENCE [LARGE SCALE MRNA]</scope>
    <source>
        <tissue>Brain cortex</tissue>
    </source>
</reference>
<feature type="chain" id="PRO_0000259422" description="Eukaryotic translation initiation factor 5">
    <location>
        <begin position="1"/>
        <end position="431"/>
    </location>
</feature>
<feature type="domain" description="W2" evidence="3">
    <location>
        <begin position="233"/>
        <end position="392"/>
    </location>
</feature>
<feature type="region of interest" description="Disordered" evidence="4">
    <location>
        <begin position="143"/>
        <end position="216"/>
    </location>
</feature>
<feature type="compositionally biased region" description="Basic and acidic residues" evidence="4">
    <location>
        <begin position="153"/>
        <end position="170"/>
    </location>
</feature>
<feature type="compositionally biased region" description="Pro residues" evidence="4">
    <location>
        <begin position="178"/>
        <end position="193"/>
    </location>
</feature>
<feature type="compositionally biased region" description="Acidic residues" evidence="4">
    <location>
        <begin position="196"/>
        <end position="209"/>
    </location>
</feature>
<feature type="binding site" evidence="2">
    <location>
        <begin position="27"/>
        <end position="34"/>
    </location>
    <ligand>
        <name>GTP</name>
        <dbReference type="ChEBI" id="CHEBI:37565"/>
    </ligand>
</feature>
<feature type="site" description="Arginine finger" evidence="1">
    <location>
        <position position="15"/>
    </location>
</feature>
<feature type="modified residue" description="Phosphoserine" evidence="1">
    <location>
        <position position="10"/>
    </location>
</feature>
<feature type="modified residue" description="Phosphothreonine" evidence="1">
    <location>
        <position position="227"/>
    </location>
</feature>
<feature type="modified residue" description="Phosphoserine" evidence="1">
    <location>
        <position position="229"/>
    </location>
</feature>
<feature type="modified residue" description="Phosphoserine" evidence="1">
    <location>
        <position position="389"/>
    </location>
</feature>
<feature type="modified residue" description="Phosphoserine" evidence="1">
    <location>
        <position position="390"/>
    </location>
</feature>
<feature type="modified residue" description="Phosphoserine" evidence="1">
    <location>
        <position position="410"/>
    </location>
</feature>
<feature type="modified residue" description="Phosphoserine" evidence="1">
    <location>
        <position position="419"/>
    </location>
</feature>
<feature type="cross-link" description="Glycyl lysine isopeptide (Lys-Gly) (interchain with G-Cter in SUMO2)" evidence="1">
    <location>
        <position position="413"/>
    </location>
</feature>
<feature type="cross-link" description="Glycyl lysine isopeptide (Lys-Gly) (interchain with G-Cter in SUMO2)" evidence="1">
    <location>
        <position position="418"/>
    </location>
</feature>
<gene>
    <name type="primary">EIF5</name>
</gene>
<comment type="function">
    <text evidence="1">Component of the 43S pre-initiation complex (43S PIC), which binds to the mRNA cap-proximal region, scans mRNA 5'-untranslated region, and locates the initiation codon. In this complex, acts as a GTPase-activating protein, by promoting GTP hydrolysis by eIF2G (EIF2S3). During scanning, interacts with both EIF1 (via its C-terminal domain (CTD)) and EIF1A (via its NTD). This interaction with EIF1A contributes to the maintenance of EIF1 within the open 43S PIC. When start codon is recognized, EIF5, via its NTD, induces eIF2G (EIF2S3) to hydrolyze the GTP. Start codon recognition also induces a conformational change of the PIC to a closed state. This change increases the affinity of EIF5-CTD for EIF2-beta (EIF2S2), which allows the release, by an indirect mechanism, of EIF1 from the PIC. Finally, EIF5 stabilizes the PIC in its closed conformation.</text>
</comment>
<comment type="subunit">
    <text evidence="1">Component of the 43S pre-initiation complex (43S PIC), which is composed of the 40S ribosomal subunit, EIF1, eIF1A (EIF1AX), eIF3 complex, EIF5 and eIF2-GTP-initiator tRNA complex (eIF2 ternary complex). Interacts with eIF1A (EIF1AX) during scanning. Interacts through its C-terminal domain (CTD) with EIF1 or with eIF2-beta (EIF2S2) (mutually exclusive) through a common binding site. Interacts through its C-terminal domain (CTD) with the CTD of EIF5B. Interacts with FMR1 isoform 6; this interaction occurs in a RNA-dependent manner.</text>
</comment>
<comment type="subcellular location">
    <subcellularLocation>
        <location evidence="5">Cytoplasm</location>
    </subcellularLocation>
</comment>
<comment type="similarity">
    <text evidence="5">Belongs to the eIF-2-beta/eIF-5 family.</text>
</comment>
<evidence type="ECO:0000250" key="1">
    <source>
        <dbReference type="UniProtKB" id="P55010"/>
    </source>
</evidence>
<evidence type="ECO:0000255" key="2"/>
<evidence type="ECO:0000255" key="3">
    <source>
        <dbReference type="PROSITE-ProRule" id="PRU00695"/>
    </source>
</evidence>
<evidence type="ECO:0000256" key="4">
    <source>
        <dbReference type="SAM" id="MobiDB-lite"/>
    </source>
</evidence>
<evidence type="ECO:0000305" key="5"/>